<gene>
    <name evidence="1" type="primary">rplJ</name>
    <name type="ordered locus">Sez_1205</name>
</gene>
<feature type="chain" id="PRO_1000121017" description="Large ribosomal subunit protein uL10">
    <location>
        <begin position="1"/>
        <end position="166"/>
    </location>
</feature>
<proteinExistence type="inferred from homology"/>
<keyword id="KW-0687">Ribonucleoprotein</keyword>
<keyword id="KW-0689">Ribosomal protein</keyword>
<keyword id="KW-0694">RNA-binding</keyword>
<keyword id="KW-0699">rRNA-binding</keyword>
<accession>B4U3I0</accession>
<dbReference type="EMBL" id="CP001129">
    <property type="protein sequence ID" value="ACG62547.1"/>
    <property type="molecule type" value="Genomic_DNA"/>
</dbReference>
<dbReference type="RefSeq" id="WP_012515812.1">
    <property type="nucleotide sequence ID" value="NC_011134.1"/>
</dbReference>
<dbReference type="SMR" id="B4U3I0"/>
<dbReference type="GeneID" id="83705093"/>
<dbReference type="KEGG" id="sez:Sez_1205"/>
<dbReference type="HOGENOM" id="CLU_092227_2_0_9"/>
<dbReference type="Proteomes" id="UP000001873">
    <property type="component" value="Chromosome"/>
</dbReference>
<dbReference type="GO" id="GO:0015934">
    <property type="term" value="C:large ribosomal subunit"/>
    <property type="evidence" value="ECO:0007669"/>
    <property type="project" value="InterPro"/>
</dbReference>
<dbReference type="GO" id="GO:0070180">
    <property type="term" value="F:large ribosomal subunit rRNA binding"/>
    <property type="evidence" value="ECO:0007669"/>
    <property type="project" value="UniProtKB-UniRule"/>
</dbReference>
<dbReference type="GO" id="GO:0003735">
    <property type="term" value="F:structural constituent of ribosome"/>
    <property type="evidence" value="ECO:0007669"/>
    <property type="project" value="InterPro"/>
</dbReference>
<dbReference type="GO" id="GO:0006412">
    <property type="term" value="P:translation"/>
    <property type="evidence" value="ECO:0007669"/>
    <property type="project" value="UniProtKB-UniRule"/>
</dbReference>
<dbReference type="CDD" id="cd05797">
    <property type="entry name" value="Ribosomal_L10"/>
    <property type="match status" value="1"/>
</dbReference>
<dbReference type="FunFam" id="3.30.70.1730:FF:000001">
    <property type="entry name" value="50S ribosomal protein L10"/>
    <property type="match status" value="1"/>
</dbReference>
<dbReference type="Gene3D" id="3.30.70.1730">
    <property type="match status" value="1"/>
</dbReference>
<dbReference type="HAMAP" id="MF_00362">
    <property type="entry name" value="Ribosomal_uL10"/>
    <property type="match status" value="1"/>
</dbReference>
<dbReference type="InterPro" id="IPR001790">
    <property type="entry name" value="Ribosomal_uL10"/>
</dbReference>
<dbReference type="InterPro" id="IPR043141">
    <property type="entry name" value="Ribosomal_uL10-like_sf"/>
</dbReference>
<dbReference type="InterPro" id="IPR022973">
    <property type="entry name" value="Ribosomal_uL10_bac"/>
</dbReference>
<dbReference type="InterPro" id="IPR047865">
    <property type="entry name" value="Ribosomal_uL10_bac_type"/>
</dbReference>
<dbReference type="InterPro" id="IPR002363">
    <property type="entry name" value="Ribosomal_uL10_CS_bac"/>
</dbReference>
<dbReference type="NCBIfam" id="NF000955">
    <property type="entry name" value="PRK00099.1-1"/>
    <property type="match status" value="1"/>
</dbReference>
<dbReference type="PANTHER" id="PTHR11560">
    <property type="entry name" value="39S RIBOSOMAL PROTEIN L10, MITOCHONDRIAL"/>
    <property type="match status" value="1"/>
</dbReference>
<dbReference type="Pfam" id="PF00466">
    <property type="entry name" value="Ribosomal_L10"/>
    <property type="match status" value="1"/>
</dbReference>
<dbReference type="SUPFAM" id="SSF160369">
    <property type="entry name" value="Ribosomal protein L10-like"/>
    <property type="match status" value="1"/>
</dbReference>
<dbReference type="PROSITE" id="PS01109">
    <property type="entry name" value="RIBOSOMAL_L10"/>
    <property type="match status" value="1"/>
</dbReference>
<evidence type="ECO:0000255" key="1">
    <source>
        <dbReference type="HAMAP-Rule" id="MF_00362"/>
    </source>
</evidence>
<evidence type="ECO:0000305" key="2"/>
<organism>
    <name type="scientific">Streptococcus equi subsp. zooepidemicus (strain MGCS10565)</name>
    <dbReference type="NCBI Taxonomy" id="552526"/>
    <lineage>
        <taxon>Bacteria</taxon>
        <taxon>Bacillati</taxon>
        <taxon>Bacillota</taxon>
        <taxon>Bacilli</taxon>
        <taxon>Lactobacillales</taxon>
        <taxon>Streptococcaceae</taxon>
        <taxon>Streptococcus</taxon>
    </lineage>
</organism>
<name>RL10_STREM</name>
<reference key="1">
    <citation type="journal article" date="2008" name="PLoS ONE">
        <title>Genome sequence of a lancefield group C Streptococcus zooepidemicus strain causing epidemic nephritis: new information about an old disease.</title>
        <authorList>
            <person name="Beres S.B."/>
            <person name="Sesso R."/>
            <person name="Pinto S.W.L."/>
            <person name="Hoe N.P."/>
            <person name="Porcella S.F."/>
            <person name="Deleo F.R."/>
            <person name="Musser J.M."/>
        </authorList>
    </citation>
    <scope>NUCLEOTIDE SEQUENCE [LARGE SCALE GENOMIC DNA]</scope>
    <source>
        <strain>MGCS10565</strain>
    </source>
</reference>
<comment type="function">
    <text evidence="1">Forms part of the ribosomal stalk, playing a central role in the interaction of the ribosome with GTP-bound translation factors.</text>
</comment>
<comment type="subunit">
    <text evidence="1">Part of the ribosomal stalk of the 50S ribosomal subunit. The N-terminus interacts with L11 and the large rRNA to form the base of the stalk. The C-terminus forms an elongated spine to which L12 dimers bind in a sequential fashion forming a multimeric L10(L12)X complex.</text>
</comment>
<comment type="similarity">
    <text evidence="1">Belongs to the universal ribosomal protein uL10 family.</text>
</comment>
<sequence>MSEAIIAKKAEQVELIAEKMKAAVSIVVVDSRGLTVDQDTVLRRSLRESGVEFKVIKNSILTRAAEKAGLDELKDIFVGPSAVAFSNEDVIAPAKVINDFAKTAEALEIKGGAIEGVVSSKEEIQALAALPNREGMLSMLLSVLQAPVRNVAYAVKAVAESKEGAA</sequence>
<protein>
    <recommendedName>
        <fullName evidence="1">Large ribosomal subunit protein uL10</fullName>
    </recommendedName>
    <alternativeName>
        <fullName evidence="2">50S ribosomal protein L10</fullName>
    </alternativeName>
</protein>